<reference key="1">
    <citation type="journal article" date="2016" name="Front. Microbiol.">
        <title>Studying the mechanism of Plasmopara viticola RxLR effectors on suppressing plant immunity.</title>
        <authorList>
            <person name="Xiang J."/>
            <person name="Li X."/>
            <person name="Wu J."/>
            <person name="Yin L."/>
            <person name="Zhang Y."/>
            <person name="Lu J."/>
        </authorList>
    </citation>
    <scope>NUCLEOTIDE SEQUENCE [MRNA]</scope>
    <scope>INDUCTION</scope>
    <scope>FUNCTION</scope>
    <scope>SUBCELLULAR LOCATION</scope>
    <source>
        <strain>ZJ-1-1</strain>
    </source>
</reference>
<reference key="2">
    <citation type="journal article" date="2015" name="Physiol. Mol. Plant Pathol.">
        <title>Characterization of the secretome of Plasmopara viticola by de novo transcriptome analysis.</title>
        <authorList>
            <person name="Yin L."/>
            <person name="Li X."/>
            <person name="Xiang J."/>
            <person name="Qu J."/>
            <person name="Zhang Y."/>
            <person name="Dry I.B."/>
            <person name="Lu J."/>
        </authorList>
    </citation>
    <scope>IDENTIFICATION</scope>
    <scope>INDUCTION</scope>
    <scope>DOMAIN</scope>
</reference>
<feature type="signal peptide" evidence="1">
    <location>
        <begin position="1"/>
        <end position="26"/>
    </location>
</feature>
<feature type="chain" id="PRO_5008116093" description="Secreted RxLR effector protein 22">
    <location>
        <begin position="27"/>
        <end position="125"/>
    </location>
</feature>
<feature type="region of interest" description="Disordered" evidence="2">
    <location>
        <begin position="21"/>
        <end position="66"/>
    </location>
</feature>
<feature type="short sequence motif" description="RxLR-dEER" evidence="7">
    <location>
        <begin position="32"/>
        <end position="50"/>
    </location>
</feature>
<gene>
    <name evidence="5" type="primary">RxLR22</name>
</gene>
<name>RLR22_PLAVT</name>
<keyword id="KW-1048">Host nucleus</keyword>
<keyword id="KW-0964">Secreted</keyword>
<keyword id="KW-0732">Signal</keyword>
<keyword id="KW-0843">Virulence</keyword>
<accession>A0A182BSS1</accession>
<dbReference type="EMBL" id="KX010955">
    <property type="protein sequence ID" value="ANC73375.1"/>
    <property type="molecule type" value="mRNA"/>
</dbReference>
<dbReference type="GO" id="GO:0005576">
    <property type="term" value="C:extracellular region"/>
    <property type="evidence" value="ECO:0007669"/>
    <property type="project" value="UniProtKB-SubCell"/>
</dbReference>
<dbReference type="GO" id="GO:0042025">
    <property type="term" value="C:host cell nucleus"/>
    <property type="evidence" value="ECO:0007669"/>
    <property type="project" value="UniProtKB-SubCell"/>
</dbReference>
<evidence type="ECO:0000255" key="1"/>
<evidence type="ECO:0000256" key="2">
    <source>
        <dbReference type="SAM" id="MobiDB-lite"/>
    </source>
</evidence>
<evidence type="ECO:0000269" key="3">
    <source>
    </source>
</evidence>
<evidence type="ECO:0000269" key="4">
    <source ref="2"/>
</evidence>
<evidence type="ECO:0000303" key="5">
    <source ref="2"/>
</evidence>
<evidence type="ECO:0000305" key="6"/>
<evidence type="ECO:0000305" key="7">
    <source ref="2"/>
</evidence>
<sequence>MRLIYSALVTAAAMVAISNGSTPARGNEVETRSLRGGNEVDSSMSDDGERAARGGGRVRSQASGVTRHVGGGGPFIGFWYPYYNFEEKKEKKEKHHLSDEYEEYRRIAAEVKRKRQDKRLAERQD</sequence>
<proteinExistence type="evidence at transcript level"/>
<protein>
    <recommendedName>
        <fullName evidence="5">Secreted RxLR effector protein 22</fullName>
    </recommendedName>
</protein>
<comment type="function">
    <text evidence="3">Effector that acts as a broad suppressor of cell death to interrupt plant immunity. Inhibits cell death induced by cell death-inducing proteins, including the PAMP elicitor INF1 from P.infestans.</text>
</comment>
<comment type="subcellular location">
    <subcellularLocation>
        <location evidence="3">Secreted</location>
    </subcellularLocation>
    <subcellularLocation>
        <location evidence="3">Host nucleus</location>
    </subcellularLocation>
</comment>
<comment type="induction">
    <text evidence="3 4">Expression is up-regulated at the earlier infection stages.</text>
</comment>
<comment type="domain">
    <text evidence="7">The RxLR-dEER motif acts to carry the protein into the host cell cytoplasm through binding to cell surface phosphatidylinositol-3-phosphate.</text>
</comment>
<comment type="similarity">
    <text evidence="6">Belongs to the RxLR effector family.</text>
</comment>
<organism>
    <name type="scientific">Plasmopara viticola</name>
    <name type="common">Downy mildew of grapevine</name>
    <name type="synonym">Botrytis viticola</name>
    <dbReference type="NCBI Taxonomy" id="143451"/>
    <lineage>
        <taxon>Eukaryota</taxon>
        <taxon>Sar</taxon>
        <taxon>Stramenopiles</taxon>
        <taxon>Oomycota</taxon>
        <taxon>Peronosporales</taxon>
        <taxon>Peronosporaceae</taxon>
        <taxon>Plasmopara</taxon>
    </lineage>
</organism>